<accession>Q5TGJ6</accession>
<accession>Q96MJ6</accession>
<sequence length="251" mass="27234">MSAYGMPMYKSGDLVFAKLKGYAHWPARIEHMTQPNRYQVFFFGTHETAFLSPKRLFPYKECKEKFGKPNKRRGFSAGLWEIENNPTVQASDCPLASEKGSGDGPWPEPEAAEGDEDKPTHAGGGGDELGKPDDDKPTEEEKGPLKRSAGDPPEDAPKRPKEAAPDQEEEAEAERAAEAERAAAAAAATAVDEESPFLVAVENGSAPSEPGLVCEPPQPEEEELREEEVADEEASQEWHAEAPGGGDRDSL</sequence>
<organism>
    <name type="scientific">Homo sapiens</name>
    <name type="common">Human</name>
    <dbReference type="NCBI Taxonomy" id="9606"/>
    <lineage>
        <taxon>Eukaryota</taxon>
        <taxon>Metazoa</taxon>
        <taxon>Chordata</taxon>
        <taxon>Craniata</taxon>
        <taxon>Vertebrata</taxon>
        <taxon>Euteleostomi</taxon>
        <taxon>Mammalia</taxon>
        <taxon>Eutheria</taxon>
        <taxon>Euarchontoglires</taxon>
        <taxon>Primates</taxon>
        <taxon>Haplorrhini</taxon>
        <taxon>Catarrhini</taxon>
        <taxon>Hominidae</taxon>
        <taxon>Homo</taxon>
    </lineage>
</organism>
<reference key="1">
    <citation type="journal article" date="2004" name="Nat. Genet.">
        <title>Complete sequencing and characterization of 21,243 full-length human cDNAs.</title>
        <authorList>
            <person name="Ota T."/>
            <person name="Suzuki Y."/>
            <person name="Nishikawa T."/>
            <person name="Otsuki T."/>
            <person name="Sugiyama T."/>
            <person name="Irie R."/>
            <person name="Wakamatsu A."/>
            <person name="Hayashi K."/>
            <person name="Sato H."/>
            <person name="Nagai K."/>
            <person name="Kimura K."/>
            <person name="Makita H."/>
            <person name="Sekine M."/>
            <person name="Obayashi M."/>
            <person name="Nishi T."/>
            <person name="Shibahara T."/>
            <person name="Tanaka T."/>
            <person name="Ishii S."/>
            <person name="Yamamoto J."/>
            <person name="Saito K."/>
            <person name="Kawai Y."/>
            <person name="Isono Y."/>
            <person name="Nakamura Y."/>
            <person name="Nagahari K."/>
            <person name="Murakami K."/>
            <person name="Yasuda T."/>
            <person name="Iwayanagi T."/>
            <person name="Wagatsuma M."/>
            <person name="Shiratori A."/>
            <person name="Sudo H."/>
            <person name="Hosoiri T."/>
            <person name="Kaku Y."/>
            <person name="Kodaira H."/>
            <person name="Kondo H."/>
            <person name="Sugawara M."/>
            <person name="Takahashi M."/>
            <person name="Kanda K."/>
            <person name="Yokoi T."/>
            <person name="Furuya T."/>
            <person name="Kikkawa E."/>
            <person name="Omura Y."/>
            <person name="Abe K."/>
            <person name="Kamihara K."/>
            <person name="Katsuta N."/>
            <person name="Sato K."/>
            <person name="Tanikawa M."/>
            <person name="Yamazaki M."/>
            <person name="Ninomiya K."/>
            <person name="Ishibashi T."/>
            <person name="Yamashita H."/>
            <person name="Murakawa K."/>
            <person name="Fujimori K."/>
            <person name="Tanai H."/>
            <person name="Kimata M."/>
            <person name="Watanabe M."/>
            <person name="Hiraoka S."/>
            <person name="Chiba Y."/>
            <person name="Ishida S."/>
            <person name="Ono Y."/>
            <person name="Takiguchi S."/>
            <person name="Watanabe S."/>
            <person name="Yosida M."/>
            <person name="Hotuta T."/>
            <person name="Kusano J."/>
            <person name="Kanehori K."/>
            <person name="Takahashi-Fujii A."/>
            <person name="Hara H."/>
            <person name="Tanase T.-O."/>
            <person name="Nomura Y."/>
            <person name="Togiya S."/>
            <person name="Komai F."/>
            <person name="Hara R."/>
            <person name="Takeuchi K."/>
            <person name="Arita M."/>
            <person name="Imose N."/>
            <person name="Musashino K."/>
            <person name="Yuuki H."/>
            <person name="Oshima A."/>
            <person name="Sasaki N."/>
            <person name="Aotsuka S."/>
            <person name="Yoshikawa Y."/>
            <person name="Matsunawa H."/>
            <person name="Ichihara T."/>
            <person name="Shiohata N."/>
            <person name="Sano S."/>
            <person name="Moriya S."/>
            <person name="Momiyama H."/>
            <person name="Satoh N."/>
            <person name="Takami S."/>
            <person name="Terashima Y."/>
            <person name="Suzuki O."/>
            <person name="Nakagawa S."/>
            <person name="Senoh A."/>
            <person name="Mizoguchi H."/>
            <person name="Goto Y."/>
            <person name="Shimizu F."/>
            <person name="Wakebe H."/>
            <person name="Hishigaki H."/>
            <person name="Watanabe T."/>
            <person name="Sugiyama A."/>
            <person name="Takemoto M."/>
            <person name="Kawakami B."/>
            <person name="Yamazaki M."/>
            <person name="Watanabe K."/>
            <person name="Kumagai A."/>
            <person name="Itakura S."/>
            <person name="Fukuzumi Y."/>
            <person name="Fujimori Y."/>
            <person name="Komiyama M."/>
            <person name="Tashiro H."/>
            <person name="Tanigami A."/>
            <person name="Fujiwara T."/>
            <person name="Ono T."/>
            <person name="Yamada K."/>
            <person name="Fujii Y."/>
            <person name="Ozaki K."/>
            <person name="Hirao M."/>
            <person name="Ohmori Y."/>
            <person name="Kawabata A."/>
            <person name="Hikiji T."/>
            <person name="Kobatake N."/>
            <person name="Inagaki H."/>
            <person name="Ikema Y."/>
            <person name="Okamoto S."/>
            <person name="Okitani R."/>
            <person name="Kawakami T."/>
            <person name="Noguchi S."/>
            <person name="Itoh T."/>
            <person name="Shigeta K."/>
            <person name="Senba T."/>
            <person name="Matsumura K."/>
            <person name="Nakajima Y."/>
            <person name="Mizuno T."/>
            <person name="Morinaga M."/>
            <person name="Sasaki M."/>
            <person name="Togashi T."/>
            <person name="Oyama M."/>
            <person name="Hata H."/>
            <person name="Watanabe M."/>
            <person name="Komatsu T."/>
            <person name="Mizushima-Sugano J."/>
            <person name="Satoh T."/>
            <person name="Shirai Y."/>
            <person name="Takahashi Y."/>
            <person name="Nakagawa K."/>
            <person name="Okumura K."/>
            <person name="Nagase T."/>
            <person name="Nomura N."/>
            <person name="Kikuchi H."/>
            <person name="Masuho Y."/>
            <person name="Yamashita R."/>
            <person name="Nakai K."/>
            <person name="Yada T."/>
            <person name="Nakamura Y."/>
            <person name="Ohara O."/>
            <person name="Isogai T."/>
            <person name="Sugano S."/>
        </authorList>
    </citation>
    <scope>NUCLEOTIDE SEQUENCE [LARGE SCALE MRNA]</scope>
    <source>
        <tissue>Prostate</tissue>
    </source>
</reference>
<reference key="2">
    <citation type="journal article" date="2003" name="Nature">
        <title>The DNA sequence and analysis of human chromosome 6.</title>
        <authorList>
            <person name="Mungall A.J."/>
            <person name="Palmer S.A."/>
            <person name="Sims S.K."/>
            <person name="Edwards C.A."/>
            <person name="Ashurst J.L."/>
            <person name="Wilming L."/>
            <person name="Jones M.C."/>
            <person name="Horton R."/>
            <person name="Hunt S.E."/>
            <person name="Scott C.E."/>
            <person name="Gilbert J.G.R."/>
            <person name="Clamp M.E."/>
            <person name="Bethel G."/>
            <person name="Milne S."/>
            <person name="Ainscough R."/>
            <person name="Almeida J.P."/>
            <person name="Ambrose K.D."/>
            <person name="Andrews T.D."/>
            <person name="Ashwell R.I.S."/>
            <person name="Babbage A.K."/>
            <person name="Bagguley C.L."/>
            <person name="Bailey J."/>
            <person name="Banerjee R."/>
            <person name="Barker D.J."/>
            <person name="Barlow K.F."/>
            <person name="Bates K."/>
            <person name="Beare D.M."/>
            <person name="Beasley H."/>
            <person name="Beasley O."/>
            <person name="Bird C.P."/>
            <person name="Blakey S.E."/>
            <person name="Bray-Allen S."/>
            <person name="Brook J."/>
            <person name="Brown A.J."/>
            <person name="Brown J.Y."/>
            <person name="Burford D.C."/>
            <person name="Burrill W."/>
            <person name="Burton J."/>
            <person name="Carder C."/>
            <person name="Carter N.P."/>
            <person name="Chapman J.C."/>
            <person name="Clark S.Y."/>
            <person name="Clark G."/>
            <person name="Clee C.M."/>
            <person name="Clegg S."/>
            <person name="Cobley V."/>
            <person name="Collier R.E."/>
            <person name="Collins J.E."/>
            <person name="Colman L.K."/>
            <person name="Corby N.R."/>
            <person name="Coville G.J."/>
            <person name="Culley K.M."/>
            <person name="Dhami P."/>
            <person name="Davies J."/>
            <person name="Dunn M."/>
            <person name="Earthrowl M.E."/>
            <person name="Ellington A.E."/>
            <person name="Evans K.A."/>
            <person name="Faulkner L."/>
            <person name="Francis M.D."/>
            <person name="Frankish A."/>
            <person name="Frankland J."/>
            <person name="French L."/>
            <person name="Garner P."/>
            <person name="Garnett J."/>
            <person name="Ghori M.J."/>
            <person name="Gilby L.M."/>
            <person name="Gillson C.J."/>
            <person name="Glithero R.J."/>
            <person name="Grafham D.V."/>
            <person name="Grant M."/>
            <person name="Gribble S."/>
            <person name="Griffiths C."/>
            <person name="Griffiths M.N.D."/>
            <person name="Hall R."/>
            <person name="Halls K.S."/>
            <person name="Hammond S."/>
            <person name="Harley J.L."/>
            <person name="Hart E.A."/>
            <person name="Heath P.D."/>
            <person name="Heathcott R."/>
            <person name="Holmes S.J."/>
            <person name="Howden P.J."/>
            <person name="Howe K.L."/>
            <person name="Howell G.R."/>
            <person name="Huckle E."/>
            <person name="Humphray S.J."/>
            <person name="Humphries M.D."/>
            <person name="Hunt A.R."/>
            <person name="Johnson C.M."/>
            <person name="Joy A.A."/>
            <person name="Kay M."/>
            <person name="Keenan S.J."/>
            <person name="Kimberley A.M."/>
            <person name="King A."/>
            <person name="Laird G.K."/>
            <person name="Langford C."/>
            <person name="Lawlor S."/>
            <person name="Leongamornlert D.A."/>
            <person name="Leversha M."/>
            <person name="Lloyd C.R."/>
            <person name="Lloyd D.M."/>
            <person name="Loveland J.E."/>
            <person name="Lovell J."/>
            <person name="Martin S."/>
            <person name="Mashreghi-Mohammadi M."/>
            <person name="Maslen G.L."/>
            <person name="Matthews L."/>
            <person name="McCann O.T."/>
            <person name="McLaren S.J."/>
            <person name="McLay K."/>
            <person name="McMurray A."/>
            <person name="Moore M.J.F."/>
            <person name="Mullikin J.C."/>
            <person name="Niblett D."/>
            <person name="Nickerson T."/>
            <person name="Novik K.L."/>
            <person name="Oliver K."/>
            <person name="Overton-Larty E.K."/>
            <person name="Parker A."/>
            <person name="Patel R."/>
            <person name="Pearce A.V."/>
            <person name="Peck A.I."/>
            <person name="Phillimore B.J.C.T."/>
            <person name="Phillips S."/>
            <person name="Plumb R.W."/>
            <person name="Porter K.M."/>
            <person name="Ramsey Y."/>
            <person name="Ranby S.A."/>
            <person name="Rice C.M."/>
            <person name="Ross M.T."/>
            <person name="Searle S.M."/>
            <person name="Sehra H.K."/>
            <person name="Sheridan E."/>
            <person name="Skuce C.D."/>
            <person name="Smith S."/>
            <person name="Smith M."/>
            <person name="Spraggon L."/>
            <person name="Squares S.L."/>
            <person name="Steward C.A."/>
            <person name="Sycamore N."/>
            <person name="Tamlyn-Hall G."/>
            <person name="Tester J."/>
            <person name="Theaker A.J."/>
            <person name="Thomas D.W."/>
            <person name="Thorpe A."/>
            <person name="Tracey A."/>
            <person name="Tromans A."/>
            <person name="Tubby B."/>
            <person name="Wall M."/>
            <person name="Wallis J.M."/>
            <person name="West A.P."/>
            <person name="White S.S."/>
            <person name="Whitehead S.L."/>
            <person name="Whittaker H."/>
            <person name="Wild A."/>
            <person name="Willey D.J."/>
            <person name="Wilmer T.E."/>
            <person name="Wood J.M."/>
            <person name="Wray P.W."/>
            <person name="Wyatt J.C."/>
            <person name="Young L."/>
            <person name="Younger R.M."/>
            <person name="Bentley D.R."/>
            <person name="Coulson A."/>
            <person name="Durbin R.M."/>
            <person name="Hubbard T."/>
            <person name="Sulston J.E."/>
            <person name="Dunham I."/>
            <person name="Rogers J."/>
            <person name="Beck S."/>
        </authorList>
    </citation>
    <scope>NUCLEOTIDE SEQUENCE [LARGE SCALE GENOMIC DNA]</scope>
</reference>
<reference key="3">
    <citation type="submission" date="2005-07" db="EMBL/GenBank/DDBJ databases">
        <authorList>
            <person name="Mural R.J."/>
            <person name="Istrail S."/>
            <person name="Sutton G.G."/>
            <person name="Florea L."/>
            <person name="Halpern A.L."/>
            <person name="Mobarry C.M."/>
            <person name="Lippert R."/>
            <person name="Walenz B."/>
            <person name="Shatkay H."/>
            <person name="Dew I."/>
            <person name="Miller J.R."/>
            <person name="Flanigan M.J."/>
            <person name="Edwards N.J."/>
            <person name="Bolanos R."/>
            <person name="Fasulo D."/>
            <person name="Halldorsson B.V."/>
            <person name="Hannenhalli S."/>
            <person name="Turner R."/>
            <person name="Yooseph S."/>
            <person name="Lu F."/>
            <person name="Nusskern D.R."/>
            <person name="Shue B.C."/>
            <person name="Zheng X.H."/>
            <person name="Zhong F."/>
            <person name="Delcher A.L."/>
            <person name="Huson D.H."/>
            <person name="Kravitz S.A."/>
            <person name="Mouchard L."/>
            <person name="Reinert K."/>
            <person name="Remington K.A."/>
            <person name="Clark A.G."/>
            <person name="Waterman M.S."/>
            <person name="Eichler E.E."/>
            <person name="Adams M.D."/>
            <person name="Hunkapiller M.W."/>
            <person name="Myers E.W."/>
            <person name="Venter J.C."/>
        </authorList>
    </citation>
    <scope>NUCLEOTIDE SEQUENCE [LARGE SCALE GENOMIC DNA]</scope>
</reference>
<name>HDGL1_HUMAN</name>
<feature type="chain" id="PRO_0000334652" description="Hepatoma-derived growth factor-like protein 1">
    <location>
        <begin position="1"/>
        <end position="251"/>
    </location>
</feature>
<feature type="domain" description="PWWP" evidence="1">
    <location>
        <begin position="11"/>
        <end position="62"/>
    </location>
</feature>
<feature type="region of interest" description="Disordered" evidence="2">
    <location>
        <begin position="89"/>
        <end position="251"/>
    </location>
</feature>
<feature type="compositionally biased region" description="Basic and acidic residues" evidence="2">
    <location>
        <begin position="128"/>
        <end position="144"/>
    </location>
</feature>
<feature type="compositionally biased region" description="Basic and acidic residues" evidence="2">
    <location>
        <begin position="155"/>
        <end position="164"/>
    </location>
</feature>
<feature type="compositionally biased region" description="Acidic residues" evidence="2">
    <location>
        <begin position="218"/>
        <end position="235"/>
    </location>
</feature>
<feature type="compositionally biased region" description="Basic and acidic residues" evidence="2">
    <location>
        <begin position="236"/>
        <end position="251"/>
    </location>
</feature>
<feature type="sequence variant" id="VAR_043447" description="In dbSNP:rs2076506.">
    <original>T</original>
    <variation>M</variation>
    <location>
        <position position="87"/>
    </location>
</feature>
<feature type="sequence conflict" description="In Ref. 1; BAB71292." evidence="3" ref="1">
    <original>R</original>
    <variation>G</variation>
    <location>
        <position position="28"/>
    </location>
</feature>
<feature type="sequence conflict" description="In Ref. 1; BAB71292." evidence="3" ref="1">
    <original>H</original>
    <variation>R</variation>
    <location>
        <position position="31"/>
    </location>
</feature>
<feature type="sequence conflict" description="In Ref. 1; BAB71292." evidence="3" ref="1">
    <original>D</original>
    <variation>Y</variation>
    <location>
        <position position="92"/>
    </location>
</feature>
<feature type="sequence conflict" description="In Ref. 1; BAB71292." evidence="3" ref="1">
    <original>L</original>
    <variation>P</variation>
    <location>
        <position position="198"/>
    </location>
</feature>
<comment type="similarity">
    <text evidence="3">Belongs to the HDGF family.</text>
</comment>
<proteinExistence type="evidence at protein level"/>
<keyword id="KW-1267">Proteomics identification</keyword>
<keyword id="KW-1185">Reference proteome</keyword>
<gene>
    <name type="primary">HDGFL1</name>
    <name type="synonym">PWWP1</name>
</gene>
<evidence type="ECO:0000255" key="1">
    <source>
        <dbReference type="PROSITE-ProRule" id="PRU00162"/>
    </source>
</evidence>
<evidence type="ECO:0000256" key="2">
    <source>
        <dbReference type="SAM" id="MobiDB-lite"/>
    </source>
</evidence>
<evidence type="ECO:0000305" key="3"/>
<protein>
    <recommendedName>
        <fullName>Hepatoma-derived growth factor-like protein 1</fullName>
    </recommendedName>
    <alternativeName>
        <fullName>PWWP domain-containing protein 1</fullName>
    </alternativeName>
</protein>
<dbReference type="EMBL" id="AK056824">
    <property type="protein sequence ID" value="BAB71292.1"/>
    <property type="molecule type" value="mRNA"/>
</dbReference>
<dbReference type="EMBL" id="AL033539">
    <property type="status" value="NOT_ANNOTATED_CDS"/>
    <property type="molecule type" value="Genomic_DNA"/>
</dbReference>
<dbReference type="EMBL" id="CH471087">
    <property type="protein sequence ID" value="EAW55436.1"/>
    <property type="molecule type" value="Genomic_DNA"/>
</dbReference>
<dbReference type="CCDS" id="CCDS34347.1"/>
<dbReference type="RefSeq" id="NP_612641.2">
    <property type="nucleotide sequence ID" value="NM_138574.4"/>
</dbReference>
<dbReference type="SMR" id="Q5TGJ6"/>
<dbReference type="BioGRID" id="127538">
    <property type="interactions" value="11"/>
</dbReference>
<dbReference type="FunCoup" id="Q5TGJ6">
    <property type="interactions" value="21"/>
</dbReference>
<dbReference type="STRING" id="9606.ENSP00000442129"/>
<dbReference type="PhosphoSitePlus" id="Q5TGJ6"/>
<dbReference type="BioMuta" id="HDGFL1"/>
<dbReference type="DMDM" id="74746497"/>
<dbReference type="MassIVE" id="Q5TGJ6"/>
<dbReference type="PaxDb" id="9606-ENSP00000442129"/>
<dbReference type="PeptideAtlas" id="Q5TGJ6"/>
<dbReference type="ProteomicsDB" id="65121"/>
<dbReference type="Antibodypedia" id="64027">
    <property type="antibodies" value="91 antibodies from 15 providers"/>
</dbReference>
<dbReference type="DNASU" id="154150"/>
<dbReference type="Ensembl" id="ENST00000510882.4">
    <property type="protein sequence ID" value="ENSP00000442129.1"/>
    <property type="gene ID" value="ENSG00000112273.7"/>
</dbReference>
<dbReference type="GeneID" id="154150"/>
<dbReference type="KEGG" id="hsa:154150"/>
<dbReference type="MANE-Select" id="ENST00000510882.4">
    <property type="protein sequence ID" value="ENSP00000442129.1"/>
    <property type="RefSeq nucleotide sequence ID" value="NM_138574.4"/>
    <property type="RefSeq protein sequence ID" value="NP_612641.2"/>
</dbReference>
<dbReference type="UCSC" id="uc003nds.4">
    <property type="organism name" value="human"/>
</dbReference>
<dbReference type="AGR" id="HGNC:21095"/>
<dbReference type="CTD" id="154150"/>
<dbReference type="DisGeNET" id="154150"/>
<dbReference type="GeneCards" id="HDGFL1"/>
<dbReference type="HGNC" id="HGNC:21095">
    <property type="gene designation" value="HDGFL1"/>
</dbReference>
<dbReference type="HPA" id="ENSG00000112273">
    <property type="expression patterns" value="Tissue enriched (testis)"/>
</dbReference>
<dbReference type="neXtProt" id="NX_Q5TGJ6"/>
<dbReference type="OpenTargets" id="ENSG00000112273"/>
<dbReference type="PharmGKB" id="PA134981303"/>
<dbReference type="VEuPathDB" id="HostDB:ENSG00000112273"/>
<dbReference type="eggNOG" id="KOG1904">
    <property type="taxonomic scope" value="Eukaryota"/>
</dbReference>
<dbReference type="GeneTree" id="ENSGT00940000163720"/>
<dbReference type="HOGENOM" id="CLU_090867_0_0_1"/>
<dbReference type="InParanoid" id="Q5TGJ6"/>
<dbReference type="OMA" id="AYGMPMY"/>
<dbReference type="OrthoDB" id="62853at2759"/>
<dbReference type="PAN-GO" id="Q5TGJ6">
    <property type="GO annotations" value="4 GO annotations based on evolutionary models"/>
</dbReference>
<dbReference type="PhylomeDB" id="Q5TGJ6"/>
<dbReference type="TreeFam" id="TF105385"/>
<dbReference type="PathwayCommons" id="Q5TGJ6"/>
<dbReference type="BioGRID-ORCS" id="154150">
    <property type="hits" value="6 hits in 1142 CRISPR screens"/>
</dbReference>
<dbReference type="GenomeRNAi" id="154150"/>
<dbReference type="Pharos" id="Q5TGJ6">
    <property type="development level" value="Tbio"/>
</dbReference>
<dbReference type="PRO" id="PR:Q5TGJ6"/>
<dbReference type="Proteomes" id="UP000005640">
    <property type="component" value="Chromosome 6"/>
</dbReference>
<dbReference type="RNAct" id="Q5TGJ6">
    <property type="molecule type" value="protein"/>
</dbReference>
<dbReference type="Bgee" id="ENSG00000112273">
    <property type="expression patterns" value="Expressed in sperm and 43 other cell types or tissues"/>
</dbReference>
<dbReference type="ExpressionAtlas" id="Q5TGJ6">
    <property type="expression patterns" value="baseline and differential"/>
</dbReference>
<dbReference type="GO" id="GO:0005634">
    <property type="term" value="C:nucleus"/>
    <property type="evidence" value="ECO:0000318"/>
    <property type="project" value="GO_Central"/>
</dbReference>
<dbReference type="GO" id="GO:0006338">
    <property type="term" value="P:chromatin remodeling"/>
    <property type="evidence" value="ECO:0000318"/>
    <property type="project" value="GO_Central"/>
</dbReference>
<dbReference type="FunFam" id="2.30.30.140:FF:000017">
    <property type="entry name" value="hepatoma-derived growth factor isoform X1"/>
    <property type="match status" value="1"/>
</dbReference>
<dbReference type="Gene3D" id="2.30.30.140">
    <property type="match status" value="1"/>
</dbReference>
<dbReference type="InterPro" id="IPR000313">
    <property type="entry name" value="PWWP_dom"/>
</dbReference>
<dbReference type="PANTHER" id="PTHR12550:SF81">
    <property type="entry name" value="HEPATOMA-DERIVED GROWTH FACTOR-LIKE PROTEIN 1"/>
    <property type="match status" value="1"/>
</dbReference>
<dbReference type="PANTHER" id="PTHR12550">
    <property type="entry name" value="HEPATOMA-DERIVED GROWTH FACTOR-RELATED"/>
    <property type="match status" value="1"/>
</dbReference>
<dbReference type="Pfam" id="PF00855">
    <property type="entry name" value="PWWP"/>
    <property type="match status" value="1"/>
</dbReference>
<dbReference type="SMART" id="SM00293">
    <property type="entry name" value="PWWP"/>
    <property type="match status" value="1"/>
</dbReference>
<dbReference type="SUPFAM" id="SSF63748">
    <property type="entry name" value="Tudor/PWWP/MBT"/>
    <property type="match status" value="1"/>
</dbReference>
<dbReference type="PROSITE" id="PS50812">
    <property type="entry name" value="PWWP"/>
    <property type="match status" value="1"/>
</dbReference>